<dbReference type="EMBL" id="CP001956">
    <property type="protein sequence ID" value="ADE05163.1"/>
    <property type="molecule type" value="Genomic_DNA"/>
</dbReference>
<dbReference type="PIR" id="I33084">
    <property type="entry name" value="I33084"/>
</dbReference>
<dbReference type="RefSeq" id="WP_004042567.1">
    <property type="nucleotide sequence ID" value="NC_013967.1"/>
</dbReference>
<dbReference type="SMR" id="P50563"/>
<dbReference type="IntAct" id="P50563">
    <property type="interactions" value="2"/>
</dbReference>
<dbReference type="STRING" id="309800.HVO_2545"/>
<dbReference type="PaxDb" id="309800-C498_08015"/>
<dbReference type="EnsemblBacteria" id="ADE05163">
    <property type="protein sequence ID" value="ADE05163"/>
    <property type="gene ID" value="HVO_2545"/>
</dbReference>
<dbReference type="GeneID" id="8926004"/>
<dbReference type="KEGG" id="hvo:HVO_2545"/>
<dbReference type="eggNOG" id="arCOG04088">
    <property type="taxonomic scope" value="Archaea"/>
</dbReference>
<dbReference type="HOGENOM" id="CLU_056222_2_0_2"/>
<dbReference type="OrthoDB" id="8644at2157"/>
<dbReference type="Proteomes" id="UP000008243">
    <property type="component" value="Chromosome"/>
</dbReference>
<dbReference type="GO" id="GO:0022625">
    <property type="term" value="C:cytosolic large ribosomal subunit"/>
    <property type="evidence" value="ECO:0007669"/>
    <property type="project" value="TreeGrafter"/>
</dbReference>
<dbReference type="GO" id="GO:0008097">
    <property type="term" value="F:5S rRNA binding"/>
    <property type="evidence" value="ECO:0007669"/>
    <property type="project" value="InterPro"/>
</dbReference>
<dbReference type="GO" id="GO:0003735">
    <property type="term" value="F:structural constituent of ribosome"/>
    <property type="evidence" value="ECO:0007669"/>
    <property type="project" value="InterPro"/>
</dbReference>
<dbReference type="GO" id="GO:0000027">
    <property type="term" value="P:ribosomal large subunit assembly"/>
    <property type="evidence" value="ECO:0007669"/>
    <property type="project" value="TreeGrafter"/>
</dbReference>
<dbReference type="GO" id="GO:0006412">
    <property type="term" value="P:translation"/>
    <property type="evidence" value="ECO:0007669"/>
    <property type="project" value="UniProtKB-UniRule"/>
</dbReference>
<dbReference type="CDD" id="cd00432">
    <property type="entry name" value="Ribosomal_L18_L5e"/>
    <property type="match status" value="1"/>
</dbReference>
<dbReference type="FunFam" id="3.30.420.100:FF:000008">
    <property type="entry name" value="50S ribosomal protein L18"/>
    <property type="match status" value="1"/>
</dbReference>
<dbReference type="Gene3D" id="3.30.420.100">
    <property type="match status" value="1"/>
</dbReference>
<dbReference type="HAMAP" id="MF_01337_A">
    <property type="entry name" value="Ribosomal_uL18_A"/>
    <property type="match status" value="1"/>
</dbReference>
<dbReference type="InterPro" id="IPR005485">
    <property type="entry name" value="Rbsml_uL18_euk"/>
</dbReference>
<dbReference type="NCBIfam" id="NF006342">
    <property type="entry name" value="PRK08569.1"/>
    <property type="match status" value="1"/>
</dbReference>
<dbReference type="PANTHER" id="PTHR23410:SF12">
    <property type="entry name" value="LARGE RIBOSOMAL SUBUNIT PROTEIN UL18"/>
    <property type="match status" value="1"/>
</dbReference>
<dbReference type="PANTHER" id="PTHR23410">
    <property type="entry name" value="RIBOSOMAL PROTEIN L5-RELATED"/>
    <property type="match status" value="1"/>
</dbReference>
<dbReference type="Pfam" id="PF17144">
    <property type="entry name" value="Ribosomal_L5e"/>
    <property type="match status" value="2"/>
</dbReference>
<dbReference type="PRINTS" id="PR00058">
    <property type="entry name" value="RIBOSOMALL5"/>
</dbReference>
<dbReference type="SUPFAM" id="SSF53137">
    <property type="entry name" value="Translational machinery components"/>
    <property type="match status" value="1"/>
</dbReference>
<proteinExistence type="evidence at protein level"/>
<gene>
    <name type="primary">rpl18</name>
    <name type="ordered locus">HVO_2545</name>
</gene>
<reference key="1">
    <citation type="journal article" date="2010" name="PLoS ONE">
        <title>The complete genome sequence of Haloferax volcanii DS2, a model archaeon.</title>
        <authorList>
            <person name="Hartman A.L."/>
            <person name="Norais C."/>
            <person name="Badger J.H."/>
            <person name="Delmas S."/>
            <person name="Haldenby S."/>
            <person name="Madupu R."/>
            <person name="Robinson J."/>
            <person name="Khouri H."/>
            <person name="Ren Q."/>
            <person name="Lowe T.M."/>
            <person name="Maupin-Furlow J."/>
            <person name="Pohlschroder M."/>
            <person name="Daniels C."/>
            <person name="Pfeiffer F."/>
            <person name="Allers T."/>
            <person name="Eisen J.A."/>
        </authorList>
    </citation>
    <scope>NUCLEOTIDE SEQUENCE [LARGE SCALE GENOMIC DNA]</scope>
    <source>
        <strain>ATCC 29605 / DSM 3757 / JCM 8879 / NBRC 14742 / NCIMB 2012 / VKM B-1768 / DS2</strain>
    </source>
</reference>
<reference key="2">
    <citation type="journal article" date="1994" name="Eur. J. Biochem.">
        <title>Comparative analysis of the protein components from 5S rRNA.protein complexes of halophilic archaebacteria.</title>
        <authorList>
            <person name="McDougall J."/>
            <person name="Wittmann-Liebold B."/>
        </authorList>
    </citation>
    <scope>PROTEIN SEQUENCE OF 2-24</scope>
</reference>
<name>RL18_HALVD</name>
<organism>
    <name type="scientific">Haloferax volcanii (strain ATCC 29605 / DSM 3757 / JCM 8879 / NBRC 14742 / NCIMB 2012 / VKM B-1768 / DS2)</name>
    <name type="common">Halobacterium volcanii</name>
    <dbReference type="NCBI Taxonomy" id="309800"/>
    <lineage>
        <taxon>Archaea</taxon>
        <taxon>Methanobacteriati</taxon>
        <taxon>Methanobacteriota</taxon>
        <taxon>Stenosarchaea group</taxon>
        <taxon>Halobacteria</taxon>
        <taxon>Halobacteriales</taxon>
        <taxon>Haloferacaceae</taxon>
        <taxon>Haloferax</taxon>
    </lineage>
</organism>
<protein>
    <recommendedName>
        <fullName evidence="3">Large ribosomal subunit protein uL18</fullName>
    </recommendedName>
    <alternativeName>
        <fullName>50S ribosomal protein L18</fullName>
    </alternativeName>
    <alternativeName>
        <fullName>HVOL18</fullName>
    </alternativeName>
</protein>
<feature type="initiator methionine" description="Removed" evidence="2">
    <location>
        <position position="1"/>
    </location>
</feature>
<feature type="chain" id="PRO_0000131403" description="Large ribosomal subunit protein uL18">
    <location>
        <begin position="2"/>
        <end position="184"/>
    </location>
</feature>
<keyword id="KW-0903">Direct protein sequencing</keyword>
<keyword id="KW-1185">Reference proteome</keyword>
<keyword id="KW-0687">Ribonucleoprotein</keyword>
<keyword id="KW-0689">Ribosomal protein</keyword>
<keyword id="KW-0694">RNA-binding</keyword>
<keyword id="KW-0699">rRNA-binding</keyword>
<accession>P50563</accession>
<accession>D4GTX7</accession>
<sequence>MATGPRYKVPMRRRREVRTDYHQRLRLLKSGKPRLVARVSNKHVRAQLVTPGPQGDETHAAATSADLDEYGWEAPTGNLPSAYLTGYLAGKRALAAGVEKAVLDIGLNTATPGNKVFAVQEGAIDAGLEIPHNDAVLADWDRNRGVHIAEYAEQLDEPLYSGEFDATNLPDHFDEVLGNLQEDE</sequence>
<evidence type="ECO:0000250" key="1"/>
<evidence type="ECO:0000269" key="2">
    <source>
    </source>
</evidence>
<evidence type="ECO:0000305" key="3"/>
<comment type="function">
    <text evidence="1">This is one of the proteins that bind and probably mediate the attachment of the 5S RNA into the large ribosomal subunit, where it forms part of the central protuberance.</text>
</comment>
<comment type="subunit">
    <text evidence="1">Part of the 50S ribosomal subunit. Contacts the 5S and 23S rRNAs (By similarity).</text>
</comment>
<comment type="similarity">
    <text evidence="3">Belongs to the universal ribosomal protein uL18 family.</text>
</comment>